<evidence type="ECO:0000256" key="1">
    <source>
        <dbReference type="SAM" id="MobiDB-lite"/>
    </source>
</evidence>
<evidence type="ECO:0000305" key="2"/>
<sequence>MKRTYQPSKRKRRNSVGFRTRMATRNGRKLLNRRRRHGRHSLVDL</sequence>
<comment type="similarity">
    <text evidence="2">Belongs to the bacterial ribosomal protein bL34 family.</text>
</comment>
<name>RL34_CHLPN</name>
<dbReference type="EMBL" id="AE001363">
    <property type="protein sequence ID" value="AAD19073.1"/>
    <property type="molecule type" value="Genomic_DNA"/>
</dbReference>
<dbReference type="EMBL" id="AE002161">
    <property type="protein sequence ID" value="AAF38710.1"/>
    <property type="molecule type" value="Genomic_DNA"/>
</dbReference>
<dbReference type="EMBL" id="BA000008">
    <property type="protein sequence ID" value="BAA99143.1"/>
    <property type="molecule type" value="Genomic_DNA"/>
</dbReference>
<dbReference type="EMBL" id="AE009440">
    <property type="protein sequence ID" value="AAP98898.1"/>
    <property type="molecule type" value="Genomic_DNA"/>
</dbReference>
<dbReference type="PIR" id="A72017">
    <property type="entry name" value="A72017"/>
</dbReference>
<dbReference type="PIR" id="E86607">
    <property type="entry name" value="E86607"/>
</dbReference>
<dbReference type="RefSeq" id="NP_225130.1">
    <property type="nucleotide sequence ID" value="NC_000922.1"/>
</dbReference>
<dbReference type="RefSeq" id="WP_010883570.1">
    <property type="nucleotide sequence ID" value="NZ_LN847257.1"/>
</dbReference>
<dbReference type="SMR" id="Q9Z6X1"/>
<dbReference type="STRING" id="406984.CPK_ORF01121"/>
<dbReference type="GeneID" id="45050991"/>
<dbReference type="KEGG" id="cpa:CP_0926"/>
<dbReference type="KEGG" id="cpj:rl34"/>
<dbReference type="KEGG" id="cpn:CPn_0935"/>
<dbReference type="KEGG" id="cpt:CpB0969"/>
<dbReference type="PATRIC" id="fig|115713.3.peg.1023"/>
<dbReference type="eggNOG" id="COG0230">
    <property type="taxonomic scope" value="Bacteria"/>
</dbReference>
<dbReference type="HOGENOM" id="CLU_129938_2_1_0"/>
<dbReference type="Proteomes" id="UP000000583">
    <property type="component" value="Chromosome"/>
</dbReference>
<dbReference type="Proteomes" id="UP000000801">
    <property type="component" value="Chromosome"/>
</dbReference>
<dbReference type="GO" id="GO:1990904">
    <property type="term" value="C:ribonucleoprotein complex"/>
    <property type="evidence" value="ECO:0007669"/>
    <property type="project" value="UniProtKB-KW"/>
</dbReference>
<dbReference type="GO" id="GO:0005840">
    <property type="term" value="C:ribosome"/>
    <property type="evidence" value="ECO:0007669"/>
    <property type="project" value="UniProtKB-KW"/>
</dbReference>
<dbReference type="GO" id="GO:0003735">
    <property type="term" value="F:structural constituent of ribosome"/>
    <property type="evidence" value="ECO:0007669"/>
    <property type="project" value="InterPro"/>
</dbReference>
<dbReference type="GO" id="GO:0006412">
    <property type="term" value="P:translation"/>
    <property type="evidence" value="ECO:0007669"/>
    <property type="project" value="UniProtKB-UniRule"/>
</dbReference>
<dbReference type="FunFam" id="1.10.287.3980:FF:000001">
    <property type="entry name" value="Mitochondrial ribosomal protein L34"/>
    <property type="match status" value="1"/>
</dbReference>
<dbReference type="Gene3D" id="1.10.287.3980">
    <property type="match status" value="1"/>
</dbReference>
<dbReference type="HAMAP" id="MF_00391">
    <property type="entry name" value="Ribosomal_bL34"/>
    <property type="match status" value="1"/>
</dbReference>
<dbReference type="InterPro" id="IPR000271">
    <property type="entry name" value="Ribosomal_bL34"/>
</dbReference>
<dbReference type="InterPro" id="IPR020939">
    <property type="entry name" value="Ribosomal_bL34_CS"/>
</dbReference>
<dbReference type="NCBIfam" id="TIGR01030">
    <property type="entry name" value="rpmH_bact"/>
    <property type="match status" value="1"/>
</dbReference>
<dbReference type="PANTHER" id="PTHR14503:SF4">
    <property type="entry name" value="LARGE RIBOSOMAL SUBUNIT PROTEIN BL34M"/>
    <property type="match status" value="1"/>
</dbReference>
<dbReference type="PANTHER" id="PTHR14503">
    <property type="entry name" value="MITOCHONDRIAL RIBOSOMAL PROTEIN 34 FAMILY MEMBER"/>
    <property type="match status" value="1"/>
</dbReference>
<dbReference type="Pfam" id="PF00468">
    <property type="entry name" value="Ribosomal_L34"/>
    <property type="match status" value="1"/>
</dbReference>
<dbReference type="PROSITE" id="PS00784">
    <property type="entry name" value="RIBOSOMAL_L34"/>
    <property type="match status" value="1"/>
</dbReference>
<accession>Q9Z6X1</accession>
<accession>Q9JQB0</accession>
<proteinExistence type="inferred from homology"/>
<feature type="chain" id="PRO_0000187365" description="Large ribosomal subunit protein bL34">
    <location>
        <begin position="1"/>
        <end position="45"/>
    </location>
</feature>
<feature type="region of interest" description="Disordered" evidence="1">
    <location>
        <begin position="1"/>
        <end position="45"/>
    </location>
</feature>
<feature type="compositionally biased region" description="Basic residues" evidence="1">
    <location>
        <begin position="1"/>
        <end position="14"/>
    </location>
</feature>
<feature type="compositionally biased region" description="Basic residues" evidence="1">
    <location>
        <begin position="26"/>
        <end position="45"/>
    </location>
</feature>
<keyword id="KW-0687">Ribonucleoprotein</keyword>
<keyword id="KW-0689">Ribosomal protein</keyword>
<reference key="1">
    <citation type="journal article" date="1999" name="Nat. Genet.">
        <title>Comparative genomes of Chlamydia pneumoniae and C. trachomatis.</title>
        <authorList>
            <person name="Kalman S."/>
            <person name="Mitchell W.P."/>
            <person name="Marathe R."/>
            <person name="Lammel C.J."/>
            <person name="Fan J."/>
            <person name="Hyman R.W."/>
            <person name="Olinger L."/>
            <person name="Grimwood J."/>
            <person name="Davis R.W."/>
            <person name="Stephens R.S."/>
        </authorList>
    </citation>
    <scope>NUCLEOTIDE SEQUENCE [LARGE SCALE GENOMIC DNA]</scope>
    <source>
        <strain>CWL029</strain>
    </source>
</reference>
<reference key="2">
    <citation type="journal article" date="2000" name="Nucleic Acids Res.">
        <title>Genome sequences of Chlamydia trachomatis MoPn and Chlamydia pneumoniae AR39.</title>
        <authorList>
            <person name="Read T.D."/>
            <person name="Brunham R.C."/>
            <person name="Shen C."/>
            <person name="Gill S.R."/>
            <person name="Heidelberg J.F."/>
            <person name="White O."/>
            <person name="Hickey E.K."/>
            <person name="Peterson J.D."/>
            <person name="Utterback T.R."/>
            <person name="Berry K.J."/>
            <person name="Bass S."/>
            <person name="Linher K.D."/>
            <person name="Weidman J.F."/>
            <person name="Khouri H.M."/>
            <person name="Craven B."/>
            <person name="Bowman C."/>
            <person name="Dodson R.J."/>
            <person name="Gwinn M.L."/>
            <person name="Nelson W.C."/>
            <person name="DeBoy R.T."/>
            <person name="Kolonay J.F."/>
            <person name="McClarty G."/>
            <person name="Salzberg S.L."/>
            <person name="Eisen J.A."/>
            <person name="Fraser C.M."/>
        </authorList>
    </citation>
    <scope>NUCLEOTIDE SEQUENCE [LARGE SCALE GENOMIC DNA]</scope>
    <source>
        <strain>AR39</strain>
    </source>
</reference>
<reference key="3">
    <citation type="journal article" date="2000" name="Nucleic Acids Res.">
        <title>Comparison of whole genome sequences of Chlamydia pneumoniae J138 from Japan and CWL029 from USA.</title>
        <authorList>
            <person name="Shirai M."/>
            <person name="Hirakawa H."/>
            <person name="Kimoto M."/>
            <person name="Tabuchi M."/>
            <person name="Kishi F."/>
            <person name="Ouchi K."/>
            <person name="Shiba T."/>
            <person name="Ishii K."/>
            <person name="Hattori M."/>
            <person name="Kuhara S."/>
            <person name="Nakazawa T."/>
        </authorList>
    </citation>
    <scope>NUCLEOTIDE SEQUENCE [LARGE SCALE GENOMIC DNA]</scope>
    <source>
        <strain>J138</strain>
    </source>
</reference>
<reference key="4">
    <citation type="submission" date="2002-05" db="EMBL/GenBank/DDBJ databases">
        <title>The genome sequence of Chlamydia pneumoniae TW183 and comparison with other Chlamydia strains based on whole genome sequence analysis.</title>
        <authorList>
            <person name="Geng M.M."/>
            <person name="Schuhmacher A."/>
            <person name="Muehldorfer I."/>
            <person name="Bensch K.W."/>
            <person name="Schaefer K.P."/>
            <person name="Schneider S."/>
            <person name="Pohl T."/>
            <person name="Essig A."/>
            <person name="Marre R."/>
            <person name="Melchers K."/>
        </authorList>
    </citation>
    <scope>NUCLEOTIDE SEQUENCE [LARGE SCALE GENOMIC DNA]</scope>
    <source>
        <strain>TW-183</strain>
    </source>
</reference>
<gene>
    <name type="primary">rpmH</name>
    <name type="synonym">rl34</name>
    <name type="ordered locus">CPn_0935</name>
    <name type="ordered locus">CP_0926</name>
    <name type="ordered locus">CpB0969</name>
</gene>
<protein>
    <recommendedName>
        <fullName evidence="2">Large ribosomal subunit protein bL34</fullName>
    </recommendedName>
    <alternativeName>
        <fullName>50S ribosomal protein L34</fullName>
    </alternativeName>
</protein>
<organism>
    <name type="scientific">Chlamydia pneumoniae</name>
    <name type="common">Chlamydophila pneumoniae</name>
    <dbReference type="NCBI Taxonomy" id="83558"/>
    <lineage>
        <taxon>Bacteria</taxon>
        <taxon>Pseudomonadati</taxon>
        <taxon>Chlamydiota</taxon>
        <taxon>Chlamydiia</taxon>
        <taxon>Chlamydiales</taxon>
        <taxon>Chlamydiaceae</taxon>
        <taxon>Chlamydia/Chlamydophila group</taxon>
        <taxon>Chlamydia</taxon>
    </lineage>
</organism>